<proteinExistence type="inferred from homology"/>
<comment type="function">
    <text evidence="1">ATPase component of the INO80 complex which remodels chromatin by shifting nucleosomes and is involved in DNA repair. Its ability to induce transcription of some phosphate-responsive genes is modulated by inositol polyphosphates. The INO80 complex is involved in DNA repair by associating with 'Ser-129' phosphorylated H2A histones as a response to DNA damage.</text>
</comment>
<comment type="catalytic activity">
    <reaction evidence="1">
        <text>ATP + H2O = ADP + phosphate + H(+)</text>
        <dbReference type="Rhea" id="RHEA:13065"/>
        <dbReference type="ChEBI" id="CHEBI:15377"/>
        <dbReference type="ChEBI" id="CHEBI:15378"/>
        <dbReference type="ChEBI" id="CHEBI:30616"/>
        <dbReference type="ChEBI" id="CHEBI:43474"/>
        <dbReference type="ChEBI" id="CHEBI:456216"/>
    </reaction>
</comment>
<comment type="subunit">
    <text evidence="1">Component of the chromatin-remodeling INO80 complex, at least composed of ARP4, ARP5, ARP8, RVB1, RVB2, TAF14, NHP10, IES1, IES3, IES4, IES6, ACT1, IES2, IES5 and INO80.</text>
</comment>
<comment type="subcellular location">
    <subcellularLocation>
        <location evidence="5">Nucleus</location>
    </subcellularLocation>
</comment>
<comment type="domain">
    <text evidence="2">The DBINO region is involved in binding to DNA.</text>
</comment>
<comment type="similarity">
    <text evidence="7">Belongs to the SNF2/RAD54 helicase family.</text>
</comment>
<dbReference type="EC" id="3.6.4.-" evidence="1"/>
<dbReference type="EMBL" id="AAFW02000099">
    <property type="protein sequence ID" value="EDN61972.1"/>
    <property type="molecule type" value="Genomic_DNA"/>
</dbReference>
<dbReference type="SMR" id="A6ZU34"/>
<dbReference type="HOGENOM" id="CLU_000315_26_2_1"/>
<dbReference type="Proteomes" id="UP000007060">
    <property type="component" value="Unassembled WGS sequence"/>
</dbReference>
<dbReference type="GO" id="GO:0031011">
    <property type="term" value="C:Ino80 complex"/>
    <property type="evidence" value="ECO:0007669"/>
    <property type="project" value="InterPro"/>
</dbReference>
<dbReference type="GO" id="GO:0005524">
    <property type="term" value="F:ATP binding"/>
    <property type="evidence" value="ECO:0007669"/>
    <property type="project" value="UniProtKB-KW"/>
</dbReference>
<dbReference type="GO" id="GO:0016887">
    <property type="term" value="F:ATP hydrolysis activity"/>
    <property type="evidence" value="ECO:0007669"/>
    <property type="project" value="TreeGrafter"/>
</dbReference>
<dbReference type="GO" id="GO:0140658">
    <property type="term" value="F:ATP-dependent chromatin remodeler activity"/>
    <property type="evidence" value="ECO:0007669"/>
    <property type="project" value="InterPro"/>
</dbReference>
<dbReference type="GO" id="GO:0003677">
    <property type="term" value="F:DNA binding"/>
    <property type="evidence" value="ECO:0007669"/>
    <property type="project" value="UniProtKB-KW"/>
</dbReference>
<dbReference type="GO" id="GO:0042393">
    <property type="term" value="F:histone binding"/>
    <property type="evidence" value="ECO:0007669"/>
    <property type="project" value="TreeGrafter"/>
</dbReference>
<dbReference type="GO" id="GO:0006281">
    <property type="term" value="P:DNA repair"/>
    <property type="evidence" value="ECO:0007669"/>
    <property type="project" value="UniProtKB-KW"/>
</dbReference>
<dbReference type="GO" id="GO:0006351">
    <property type="term" value="P:DNA-templated transcription"/>
    <property type="evidence" value="ECO:0007669"/>
    <property type="project" value="InterPro"/>
</dbReference>
<dbReference type="GO" id="GO:0060255">
    <property type="term" value="P:regulation of macromolecule metabolic process"/>
    <property type="evidence" value="ECO:0007669"/>
    <property type="project" value="UniProtKB-ARBA"/>
</dbReference>
<dbReference type="CDD" id="cd18002">
    <property type="entry name" value="DEXQc_INO80"/>
    <property type="match status" value="1"/>
</dbReference>
<dbReference type="CDD" id="cd18793">
    <property type="entry name" value="SF2_C_SNF"/>
    <property type="match status" value="1"/>
</dbReference>
<dbReference type="FunFam" id="3.40.50.10810:FF:000022">
    <property type="entry name" value="Blast:Putative DNA helicase Ino80"/>
    <property type="match status" value="1"/>
</dbReference>
<dbReference type="FunFam" id="3.40.50.300:FF:001445">
    <property type="entry name" value="Chromatin-remodeling ATPase INO80"/>
    <property type="match status" value="1"/>
</dbReference>
<dbReference type="FunFam" id="3.40.50.300:FF:001269">
    <property type="entry name" value="SNF2 family helicase/ATPase"/>
    <property type="match status" value="1"/>
</dbReference>
<dbReference type="Gene3D" id="3.40.50.300">
    <property type="entry name" value="P-loop containing nucleotide triphosphate hydrolases"/>
    <property type="match status" value="2"/>
</dbReference>
<dbReference type="Gene3D" id="3.40.50.10810">
    <property type="entry name" value="Tandem AAA-ATPase domain"/>
    <property type="match status" value="1"/>
</dbReference>
<dbReference type="InterPro" id="IPR020838">
    <property type="entry name" value="DBINO"/>
</dbReference>
<dbReference type="InterPro" id="IPR031047">
    <property type="entry name" value="DEXQc_INO80"/>
</dbReference>
<dbReference type="InterPro" id="IPR014001">
    <property type="entry name" value="Helicase_ATP-bd"/>
</dbReference>
<dbReference type="InterPro" id="IPR001650">
    <property type="entry name" value="Helicase_C-like"/>
</dbReference>
<dbReference type="InterPro" id="IPR050520">
    <property type="entry name" value="INO80/SWR1_helicase"/>
</dbReference>
<dbReference type="InterPro" id="IPR027417">
    <property type="entry name" value="P-loop_NTPase"/>
</dbReference>
<dbReference type="InterPro" id="IPR038718">
    <property type="entry name" value="SNF2-like_sf"/>
</dbReference>
<dbReference type="InterPro" id="IPR049730">
    <property type="entry name" value="SNF2/RAD54-like_C"/>
</dbReference>
<dbReference type="InterPro" id="IPR000330">
    <property type="entry name" value="SNF2_N"/>
</dbReference>
<dbReference type="PANTHER" id="PTHR45685:SF2">
    <property type="entry name" value="CHROMATIN-REMODELING ATPASE INO80"/>
    <property type="match status" value="1"/>
</dbReference>
<dbReference type="PANTHER" id="PTHR45685">
    <property type="entry name" value="HELICASE SRCAP-RELATED"/>
    <property type="match status" value="1"/>
</dbReference>
<dbReference type="Pfam" id="PF13892">
    <property type="entry name" value="DBINO"/>
    <property type="match status" value="1"/>
</dbReference>
<dbReference type="Pfam" id="PF00271">
    <property type="entry name" value="Helicase_C"/>
    <property type="match status" value="1"/>
</dbReference>
<dbReference type="Pfam" id="PF00176">
    <property type="entry name" value="SNF2-rel_dom"/>
    <property type="match status" value="1"/>
</dbReference>
<dbReference type="SMART" id="SM00487">
    <property type="entry name" value="DEXDc"/>
    <property type="match status" value="1"/>
</dbReference>
<dbReference type="SMART" id="SM00490">
    <property type="entry name" value="HELICc"/>
    <property type="match status" value="1"/>
</dbReference>
<dbReference type="SUPFAM" id="SSF52540">
    <property type="entry name" value="P-loop containing nucleoside triphosphate hydrolases"/>
    <property type="match status" value="2"/>
</dbReference>
<dbReference type="PROSITE" id="PS51413">
    <property type="entry name" value="DBINO"/>
    <property type="match status" value="1"/>
</dbReference>
<dbReference type="PROSITE" id="PS51192">
    <property type="entry name" value="HELICASE_ATP_BIND_1"/>
    <property type="match status" value="1"/>
</dbReference>
<dbReference type="PROSITE" id="PS51194">
    <property type="entry name" value="HELICASE_CTER"/>
    <property type="match status" value="1"/>
</dbReference>
<sequence>MSLAVLLNKEDKDISDFSKTTAGKSAKKNSRERVADVAPTRVLDKKQAYLSQLNSEFNRIKKRDSIEQLYQDWKFINLQEFELISEWNQQSKDWQFDNTNDSQDLHFKKLYRDMSMINKEWAEYQSFKNANLSDIINEKDADEDEEDDEDELEDGEEDMEEDEASTGRHTNGKSMRGNGIQKSRKKDAAAAAAVGKAIKDDQTHADTVVTVNGDENEDGNNDEDNDNDNENNNDNDNDNDNDNDNDNENENDNDNDNDDEEENGEEDEEEEEIEDLDEEDFAAFEEQDDNDDEDFNPDVEKRRKRSSSSSSSTKLSMNSLSLITSKKINKNITINSDRPKIVRELIKMCNKNKHQKIKKRRFTNCIVTDYNPIDSKLNIKITLKQYHVKRLKKLINDAKREREREEALKNNVGLDGNDLDNDEDGSESHKRRKLNNNTANGADDANKRKFNTRHGLPTYGMKMNAKEARAIQRHYDNTYTTIWKDMARKDSTKMSRLVQQIQSIRSTNFRKTSSLCAREAKKWQSKNFKQIKDFQTRARRGIREMSNFWKKNEREERDLKKKIEKEAMEQAKKEEEEKESKRQAKKLNFLLTQTELYSHFIGRKIKTNELEGNNVSNNDSESQKNIDISALAPNKNDFHAIDFDNENDEQLRLRAAENASNALAETRAKAKQFDDHANAHGEEEEEDELNFQNPTSLGEITIEQPKILACTLKEYQLKGLNWLANLYDQGINGILADEMGLGKTVQSISVLAHLAENHNIWGPFLVVTPASTLHNWVNEISKFLPQFKILPYWGNANDRKVLRKFWDRKNLRYSKNAPFHVMVTSYQMVVTDANYLQKMKWQYMILDEAQAIKSSQSSRWKNLLSFHCRNRLLLTGTPIQNSMQELWALLHFIMPSLFDSHDEFNEWFSKDIESHAEANTKLNQQQLRRLHMILKPFMLRRVKKNVQSELGDKIEIDVLCDLTQRQAKLYQVLKSQISTNYDAIENAATNDSTSNSASNSGSDQNLINAVMQFRKVCNHPDLFERADVDSPFSFTTFGKTTSMLTASVANNNSSVISNSNMNLSSMSSNNISNGKFTDLIYSSRNPIKYSLPRLIYEDLILPNYNNDVDIANKLKNVKFNIFNPSINYELCLFLSKLTGEPSLNEFFRVSNTPLLKRVIERTNGPKNTDSLSFKTITQELLEVTRNAPSEGVMASLLNVKKHAYEREYLNCIQRGYHPNVSAPPVTIEVLGSSHVTNSINNELFDPLISQALSDIPAITQYNMHVKKGIPVEDFPKTGLFPEPLNKNFSSNISTPSMDRFITESAKLRKLDELLVKLKSEGHRVLIYFQMTKMMDLMEEYLTYRQYNHIRLDGSSKLEDRRDLVHDWQTNPEIFVFLLSTRAGGLGINLTAADTVIFYDSDWNPTIDSQAMDRAHRLGQTRQVTVYRLLVRGTIEERMRDRAKQKEQVQQVVMEGKTQEKNIKTIEVGENDSEVTREGSKSISQDGIKEAASALA</sequence>
<keyword id="KW-0010">Activator</keyword>
<keyword id="KW-0067">ATP-binding</keyword>
<keyword id="KW-0227">DNA damage</keyword>
<keyword id="KW-0234">DNA repair</keyword>
<keyword id="KW-0238">DNA-binding</keyword>
<keyword id="KW-0378">Hydrolase</keyword>
<keyword id="KW-0547">Nucleotide-binding</keyword>
<keyword id="KW-0539">Nucleus</keyword>
<keyword id="KW-0597">Phosphoprotein</keyword>
<keyword id="KW-0804">Transcription</keyword>
<keyword id="KW-0805">Transcription regulation</keyword>
<accession>A6ZU34</accession>
<reference key="1">
    <citation type="journal article" date="2007" name="Proc. Natl. Acad. Sci. U.S.A.">
        <title>Genome sequencing and comparative analysis of Saccharomyces cerevisiae strain YJM789.</title>
        <authorList>
            <person name="Wei W."/>
            <person name="McCusker J.H."/>
            <person name="Hyman R.W."/>
            <person name="Jones T."/>
            <person name="Ning Y."/>
            <person name="Cao Z."/>
            <person name="Gu Z."/>
            <person name="Bruno D."/>
            <person name="Miranda M."/>
            <person name="Nguyen M."/>
            <person name="Wilhelmy J."/>
            <person name="Komp C."/>
            <person name="Tamse R."/>
            <person name="Wang X."/>
            <person name="Jia P."/>
            <person name="Luedi P."/>
            <person name="Oefner P.J."/>
            <person name="David L."/>
            <person name="Dietrich F.S."/>
            <person name="Li Y."/>
            <person name="Davis R.W."/>
            <person name="Steinmetz L.M."/>
        </authorList>
    </citation>
    <scope>NUCLEOTIDE SEQUENCE [LARGE SCALE GENOMIC DNA]</scope>
    <source>
        <strain>YJM789</strain>
    </source>
</reference>
<protein>
    <recommendedName>
        <fullName evidence="1">Chromatin-remodeling ATPase INO80</fullName>
        <ecNumber evidence="1">3.6.4.-</ecNumber>
    </recommendedName>
    <alternativeName>
        <fullName>Inositol-requiring protein 80</fullName>
    </alternativeName>
</protein>
<evidence type="ECO:0000250" key="1">
    <source>
        <dbReference type="UniProtKB" id="P53115"/>
    </source>
</evidence>
<evidence type="ECO:0000250" key="2">
    <source>
        <dbReference type="UniProtKB" id="Q9ULG1"/>
    </source>
</evidence>
<evidence type="ECO:0000255" key="3">
    <source>
        <dbReference type="PROSITE-ProRule" id="PRU00541"/>
    </source>
</evidence>
<evidence type="ECO:0000255" key="4">
    <source>
        <dbReference type="PROSITE-ProRule" id="PRU00542"/>
    </source>
</evidence>
<evidence type="ECO:0000255" key="5">
    <source>
        <dbReference type="PROSITE-ProRule" id="PRU00746"/>
    </source>
</evidence>
<evidence type="ECO:0000256" key="6">
    <source>
        <dbReference type="SAM" id="MobiDB-lite"/>
    </source>
</evidence>
<evidence type="ECO:0000305" key="7"/>
<feature type="chain" id="PRO_0000350966" description="Chromatin-remodeling ATPase INO80">
    <location>
        <begin position="1"/>
        <end position="1495"/>
    </location>
</feature>
<feature type="domain" description="DBINO" evidence="5">
    <location>
        <begin position="482"/>
        <end position="607"/>
    </location>
</feature>
<feature type="domain" description="Helicase ATP-binding" evidence="3">
    <location>
        <begin position="724"/>
        <end position="896"/>
    </location>
</feature>
<feature type="domain" description="Helicase C-terminal" evidence="4">
    <location>
        <begin position="1309"/>
        <end position="1473"/>
    </location>
</feature>
<feature type="region of interest" description="Disordered" evidence="6">
    <location>
        <begin position="137"/>
        <end position="317"/>
    </location>
</feature>
<feature type="region of interest" description="Disordered" evidence="6">
    <location>
        <begin position="399"/>
        <end position="458"/>
    </location>
</feature>
<feature type="region of interest" description="Disordered" evidence="6">
    <location>
        <begin position="1462"/>
        <end position="1495"/>
    </location>
</feature>
<feature type="short sequence motif" description="DEAQ box">
    <location>
        <begin position="847"/>
        <end position="850"/>
    </location>
</feature>
<feature type="compositionally biased region" description="Acidic residues" evidence="6">
    <location>
        <begin position="140"/>
        <end position="164"/>
    </location>
</feature>
<feature type="compositionally biased region" description="Acidic residues" evidence="6">
    <location>
        <begin position="214"/>
        <end position="297"/>
    </location>
</feature>
<feature type="compositionally biased region" description="Low complexity" evidence="6">
    <location>
        <begin position="307"/>
        <end position="317"/>
    </location>
</feature>
<feature type="compositionally biased region" description="Basic and acidic residues" evidence="6">
    <location>
        <begin position="399"/>
        <end position="408"/>
    </location>
</feature>
<feature type="binding site" evidence="3">
    <location>
        <begin position="737"/>
        <end position="744"/>
    </location>
    <ligand>
        <name>ATP</name>
        <dbReference type="ChEBI" id="CHEBI:30616"/>
    </ligand>
</feature>
<feature type="modified residue" description="Phosphoserine" evidence="1">
    <location>
        <position position="65"/>
    </location>
</feature>
<feature type="modified residue" description="Phosphoserine" evidence="1">
    <location>
        <position position="115"/>
    </location>
</feature>
<feature type="modified residue" description="Phosphoserine" evidence="1">
    <location>
        <position position="133"/>
    </location>
</feature>
<feature type="modified residue" description="Phosphoserine" evidence="1">
    <location>
        <position position="616"/>
    </location>
</feature>
<organism>
    <name type="scientific">Saccharomyces cerevisiae (strain YJM789)</name>
    <name type="common">Baker's yeast</name>
    <dbReference type="NCBI Taxonomy" id="307796"/>
    <lineage>
        <taxon>Eukaryota</taxon>
        <taxon>Fungi</taxon>
        <taxon>Dikarya</taxon>
        <taxon>Ascomycota</taxon>
        <taxon>Saccharomycotina</taxon>
        <taxon>Saccharomycetes</taxon>
        <taxon>Saccharomycetales</taxon>
        <taxon>Saccharomycetaceae</taxon>
        <taxon>Saccharomyces</taxon>
    </lineage>
</organism>
<name>INO80_YEAS7</name>
<gene>
    <name type="primary">INO80</name>
    <name type="ORF">SCY_1917</name>
</gene>